<dbReference type="EMBL" id="AABR07007384">
    <property type="status" value="NOT_ANNOTATED_CDS"/>
    <property type="molecule type" value="Genomic_DNA"/>
</dbReference>
<dbReference type="RefSeq" id="NP_001386326.1">
    <property type="nucleotide sequence ID" value="NM_001399397.2"/>
</dbReference>
<dbReference type="RefSeq" id="XP_006224017.1">
    <property type="nucleotide sequence ID" value="XM_006223955.3"/>
</dbReference>
<dbReference type="RefSeq" id="XP_006224019.1">
    <property type="nucleotide sequence ID" value="XM_006223957.3"/>
</dbReference>
<dbReference type="RefSeq" id="XP_006231793.1">
    <property type="nucleotide sequence ID" value="XM_006231731.2"/>
</dbReference>
<dbReference type="RefSeq" id="XP_006231795.1">
    <property type="nucleotide sequence ID" value="XM_006231733.5"/>
</dbReference>
<dbReference type="RefSeq" id="XP_008758864.1">
    <property type="nucleotide sequence ID" value="XM_008760642.2"/>
</dbReference>
<dbReference type="RefSeq" id="XP_008773249.1">
    <property type="nucleotide sequence ID" value="XM_008775027.2"/>
</dbReference>
<dbReference type="RefSeq" id="XP_017446652.1">
    <property type="nucleotide sequence ID" value="XM_017591163.3"/>
</dbReference>
<dbReference type="RefSeq" id="XP_017449843.1">
    <property type="nucleotide sequence ID" value="XM_017594354.1"/>
</dbReference>
<dbReference type="SMR" id="A0A096MJY4"/>
<dbReference type="FunCoup" id="A0A096MJY4">
    <property type="interactions" value="2602"/>
</dbReference>
<dbReference type="STRING" id="10116.ENSRNOP00000068323"/>
<dbReference type="iPTMnet" id="A0A096MJY4"/>
<dbReference type="PhosphoSitePlus" id="A0A096MJY4"/>
<dbReference type="PaxDb" id="10116-ENSRNOP00000068307"/>
<dbReference type="GeneID" id="499497"/>
<dbReference type="AGR" id="RGD:1563119"/>
<dbReference type="CTD" id="4208"/>
<dbReference type="RGD" id="1563119">
    <property type="gene designation" value="Mef2c"/>
</dbReference>
<dbReference type="eggNOG" id="KOG0014">
    <property type="taxonomic scope" value="Eukaryota"/>
</dbReference>
<dbReference type="InParanoid" id="A0A096MJY4"/>
<dbReference type="Reactome" id="R-RNO-525793">
    <property type="pathway name" value="Myogenesis"/>
</dbReference>
<dbReference type="PRO" id="PR:A0A096MJY4"/>
<dbReference type="Proteomes" id="UP000002494">
    <property type="component" value="Chromosome 2"/>
</dbReference>
<dbReference type="Bgee" id="ENSRNOG00000033134">
    <property type="expression patterns" value="Expressed in quadriceps femoris and 19 other cell types or tissues"/>
</dbReference>
<dbReference type="ExpressionAtlas" id="A0A096MJY4">
    <property type="expression patterns" value="baseline and differential"/>
</dbReference>
<dbReference type="GO" id="GO:0005737">
    <property type="term" value="C:cytoplasm"/>
    <property type="evidence" value="ECO:0000266"/>
    <property type="project" value="RGD"/>
</dbReference>
<dbReference type="GO" id="GO:0005829">
    <property type="term" value="C:cytosol"/>
    <property type="evidence" value="ECO:0000314"/>
    <property type="project" value="Alzheimers_University_of_Toronto"/>
</dbReference>
<dbReference type="GO" id="GO:0016607">
    <property type="term" value="C:nuclear speck"/>
    <property type="evidence" value="ECO:0000266"/>
    <property type="project" value="RGD"/>
</dbReference>
<dbReference type="GO" id="GO:0005634">
    <property type="term" value="C:nucleus"/>
    <property type="evidence" value="ECO:0000314"/>
    <property type="project" value="UniProtKB"/>
</dbReference>
<dbReference type="GO" id="GO:0098794">
    <property type="term" value="C:postsynapse"/>
    <property type="evidence" value="ECO:0007669"/>
    <property type="project" value="GOC"/>
</dbReference>
<dbReference type="GO" id="GO:0032991">
    <property type="term" value="C:protein-containing complex"/>
    <property type="evidence" value="ECO:0000250"/>
    <property type="project" value="UniProtKB"/>
</dbReference>
<dbReference type="GO" id="GO:0030017">
    <property type="term" value="C:sarcomere"/>
    <property type="evidence" value="ECO:0000314"/>
    <property type="project" value="UniProtKB"/>
</dbReference>
<dbReference type="GO" id="GO:0016528">
    <property type="term" value="C:sarcoplasm"/>
    <property type="evidence" value="ECO:0007669"/>
    <property type="project" value="UniProtKB-SubCell"/>
</dbReference>
<dbReference type="GO" id="GO:0003682">
    <property type="term" value="F:chromatin binding"/>
    <property type="evidence" value="ECO:0000266"/>
    <property type="project" value="RGD"/>
</dbReference>
<dbReference type="GO" id="GO:0000987">
    <property type="term" value="F:cis-regulatory region sequence-specific DNA binding"/>
    <property type="evidence" value="ECO:0000266"/>
    <property type="project" value="RGD"/>
</dbReference>
<dbReference type="GO" id="GO:0003677">
    <property type="term" value="F:DNA binding"/>
    <property type="evidence" value="ECO:0000314"/>
    <property type="project" value="UniProtKB"/>
</dbReference>
<dbReference type="GO" id="GO:0001228">
    <property type="term" value="F:DNA-binding transcription activator activity, RNA polymerase II-specific"/>
    <property type="evidence" value="ECO:0000250"/>
    <property type="project" value="UniProtKB"/>
</dbReference>
<dbReference type="GO" id="GO:0003700">
    <property type="term" value="F:DNA-binding transcription factor activity"/>
    <property type="evidence" value="ECO:0000266"/>
    <property type="project" value="RGD"/>
</dbReference>
<dbReference type="GO" id="GO:0000981">
    <property type="term" value="F:DNA-binding transcription factor activity, RNA polymerase II-specific"/>
    <property type="evidence" value="ECO:0000314"/>
    <property type="project" value="RGD"/>
</dbReference>
<dbReference type="GO" id="GO:0140297">
    <property type="term" value="F:DNA-binding transcription factor binding"/>
    <property type="evidence" value="ECO:0000266"/>
    <property type="project" value="RGD"/>
</dbReference>
<dbReference type="GO" id="GO:0042826">
    <property type="term" value="F:histone deacetylase binding"/>
    <property type="evidence" value="ECO:0000250"/>
    <property type="project" value="Alzheimers_University_of_Toronto"/>
</dbReference>
<dbReference type="GO" id="GO:0071837">
    <property type="term" value="F:HMG box domain binding"/>
    <property type="evidence" value="ECO:0000266"/>
    <property type="project" value="RGD"/>
</dbReference>
<dbReference type="GO" id="GO:0003680">
    <property type="term" value="F:minor groove of adenine-thymine-rich DNA binding"/>
    <property type="evidence" value="ECO:0000266"/>
    <property type="project" value="RGD"/>
</dbReference>
<dbReference type="GO" id="GO:0046982">
    <property type="term" value="F:protein heterodimerization activity"/>
    <property type="evidence" value="ECO:0000266"/>
    <property type="project" value="RGD"/>
</dbReference>
<dbReference type="GO" id="GO:0000978">
    <property type="term" value="F:RNA polymerase II cis-regulatory region sequence-specific DNA binding"/>
    <property type="evidence" value="ECO:0000266"/>
    <property type="project" value="RGD"/>
</dbReference>
<dbReference type="GO" id="GO:0000977">
    <property type="term" value="F:RNA polymerase II transcription regulatory region sequence-specific DNA binding"/>
    <property type="evidence" value="ECO:0000250"/>
    <property type="project" value="UniProtKB"/>
</dbReference>
<dbReference type="GO" id="GO:0061629">
    <property type="term" value="F:RNA polymerase II-specific DNA-binding transcription factor binding"/>
    <property type="evidence" value="ECO:0000266"/>
    <property type="project" value="RGD"/>
</dbReference>
<dbReference type="GO" id="GO:0043565">
    <property type="term" value="F:sequence-specific DNA binding"/>
    <property type="evidence" value="ECO:0000266"/>
    <property type="project" value="RGD"/>
</dbReference>
<dbReference type="GO" id="GO:1990837">
    <property type="term" value="F:sequence-specific double-stranded DNA binding"/>
    <property type="evidence" value="ECO:0000266"/>
    <property type="project" value="RGD"/>
</dbReference>
<dbReference type="GO" id="GO:0000976">
    <property type="term" value="F:transcription cis-regulatory region binding"/>
    <property type="evidence" value="ECO:0000250"/>
    <property type="project" value="UniProtKB"/>
</dbReference>
<dbReference type="GO" id="GO:0098990">
    <property type="term" value="P:AMPA selective glutamate receptor signaling pathway"/>
    <property type="evidence" value="ECO:0000250"/>
    <property type="project" value="UniProtKB"/>
</dbReference>
<dbReference type="GO" id="GO:0006915">
    <property type="term" value="P:apoptotic process"/>
    <property type="evidence" value="ECO:0007669"/>
    <property type="project" value="UniProtKB-KW"/>
</dbReference>
<dbReference type="GO" id="GO:0007411">
    <property type="term" value="P:axon guidance"/>
    <property type="evidence" value="ECO:0000266"/>
    <property type="project" value="RGD"/>
</dbReference>
<dbReference type="GO" id="GO:0001782">
    <property type="term" value="P:B cell homeostasis"/>
    <property type="evidence" value="ECO:0000250"/>
    <property type="project" value="UniProtKB"/>
</dbReference>
<dbReference type="GO" id="GO:0042100">
    <property type="term" value="P:B cell proliferation"/>
    <property type="evidence" value="ECO:0000250"/>
    <property type="project" value="UniProtKB"/>
</dbReference>
<dbReference type="GO" id="GO:0050853">
    <property type="term" value="P:B cell receptor signaling pathway"/>
    <property type="evidence" value="ECO:0000250"/>
    <property type="project" value="UniProtKB"/>
</dbReference>
<dbReference type="GO" id="GO:0001568">
    <property type="term" value="P:blood vessel development"/>
    <property type="evidence" value="ECO:0000266"/>
    <property type="project" value="RGD"/>
</dbReference>
<dbReference type="GO" id="GO:0001974">
    <property type="term" value="P:blood vessel remodeling"/>
    <property type="evidence" value="ECO:0000266"/>
    <property type="project" value="RGD"/>
</dbReference>
<dbReference type="GO" id="GO:0055007">
    <property type="term" value="P:cardiac muscle cell differentiation"/>
    <property type="evidence" value="ECO:0000266"/>
    <property type="project" value="RGD"/>
</dbReference>
<dbReference type="GO" id="GO:0014898">
    <property type="term" value="P:cardiac muscle hypertrophy in response to stress"/>
    <property type="evidence" value="ECO:0000266"/>
    <property type="project" value="RGD"/>
</dbReference>
<dbReference type="GO" id="GO:0003211">
    <property type="term" value="P:cardiac ventricle formation"/>
    <property type="evidence" value="ECO:0000266"/>
    <property type="project" value="RGD"/>
</dbReference>
<dbReference type="GO" id="GO:0060536">
    <property type="term" value="P:cartilage morphogenesis"/>
    <property type="evidence" value="ECO:0000266"/>
    <property type="project" value="RGD"/>
</dbReference>
<dbReference type="GO" id="GO:0030154">
    <property type="term" value="P:cell differentiation"/>
    <property type="evidence" value="ECO:0000318"/>
    <property type="project" value="GO_Central"/>
</dbReference>
<dbReference type="GO" id="GO:0045165">
    <property type="term" value="P:cell fate commitment"/>
    <property type="evidence" value="ECO:0000266"/>
    <property type="project" value="RGD"/>
</dbReference>
<dbReference type="GO" id="GO:0048667">
    <property type="term" value="P:cell morphogenesis involved in neuron differentiation"/>
    <property type="evidence" value="ECO:0000250"/>
    <property type="project" value="UniProtKB"/>
</dbReference>
<dbReference type="GO" id="GO:0071838">
    <property type="term" value="P:cell proliferation in bone marrow"/>
    <property type="evidence" value="ECO:0000266"/>
    <property type="project" value="RGD"/>
</dbReference>
<dbReference type="GO" id="GO:0071277">
    <property type="term" value="P:cellular response to calcium ion"/>
    <property type="evidence" value="ECO:0000250"/>
    <property type="project" value="UniProtKB"/>
</dbReference>
<dbReference type="GO" id="GO:0071498">
    <property type="term" value="P:cellular response to fluid shear stress"/>
    <property type="evidence" value="ECO:0000250"/>
    <property type="project" value="UniProtKB"/>
</dbReference>
<dbReference type="GO" id="GO:0071333">
    <property type="term" value="P:cellular response to glucose stimulus"/>
    <property type="evidence" value="ECO:0000270"/>
    <property type="project" value="RGD"/>
</dbReference>
<dbReference type="GO" id="GO:0071363">
    <property type="term" value="P:cellular response to growth factor stimulus"/>
    <property type="evidence" value="ECO:0000314"/>
    <property type="project" value="UniProtKB"/>
</dbReference>
<dbReference type="GO" id="GO:0071222">
    <property type="term" value="P:cellular response to lipopolysaccharide"/>
    <property type="evidence" value="ECO:0000250"/>
    <property type="project" value="UniProtKB"/>
</dbReference>
<dbReference type="GO" id="GO:0071374">
    <property type="term" value="P:cellular response to parathyroid hormone stimulus"/>
    <property type="evidence" value="ECO:0000250"/>
    <property type="project" value="UniProtKB"/>
</dbReference>
<dbReference type="GO" id="GO:0071300">
    <property type="term" value="P:cellular response to retinoic acid"/>
    <property type="evidence" value="ECO:0000314"/>
    <property type="project" value="RGD"/>
</dbReference>
<dbReference type="GO" id="GO:0071560">
    <property type="term" value="P:cellular response to transforming growth factor beta stimulus"/>
    <property type="evidence" value="ECO:0000250"/>
    <property type="project" value="UniProtKB"/>
</dbReference>
<dbReference type="GO" id="GO:0035984">
    <property type="term" value="P:cellular response to trichostatin A"/>
    <property type="evidence" value="ECO:0000250"/>
    <property type="project" value="UniProtKB"/>
</dbReference>
<dbReference type="GO" id="GO:0071466">
    <property type="term" value="P:cellular response to xenobiotic stimulus"/>
    <property type="evidence" value="ECO:0000250"/>
    <property type="project" value="UniProtKB"/>
</dbReference>
<dbReference type="GO" id="GO:0002062">
    <property type="term" value="P:chondrocyte differentiation"/>
    <property type="evidence" value="ECO:0000266"/>
    <property type="project" value="RGD"/>
</dbReference>
<dbReference type="GO" id="GO:0021542">
    <property type="term" value="P:dentate gyrus development"/>
    <property type="evidence" value="ECO:0000270"/>
    <property type="project" value="RGD"/>
</dbReference>
<dbReference type="GO" id="GO:0035050">
    <property type="term" value="P:embryonic heart tube development"/>
    <property type="evidence" value="ECO:0000266"/>
    <property type="project" value="RGD"/>
</dbReference>
<dbReference type="GO" id="GO:0048704">
    <property type="term" value="P:embryonic skeletal system morphogenesis"/>
    <property type="evidence" value="ECO:0000266"/>
    <property type="project" value="RGD"/>
</dbReference>
<dbReference type="GO" id="GO:0048703">
    <property type="term" value="P:embryonic viscerocranium morphogenesis"/>
    <property type="evidence" value="ECO:0000266"/>
    <property type="project" value="RGD"/>
</dbReference>
<dbReference type="GO" id="GO:0001958">
    <property type="term" value="P:endochondral ossification"/>
    <property type="evidence" value="ECO:0000266"/>
    <property type="project" value="RGD"/>
</dbReference>
<dbReference type="GO" id="GO:2001013">
    <property type="term" value="P:epithelial cell proliferation involved in renal tubule morphogenesis"/>
    <property type="evidence" value="ECO:0000250"/>
    <property type="project" value="UniProtKB"/>
</dbReference>
<dbReference type="GO" id="GO:0060079">
    <property type="term" value="P:excitatory postsynaptic potential"/>
    <property type="evidence" value="ECO:0000250"/>
    <property type="project" value="UniProtKB"/>
</dbReference>
<dbReference type="GO" id="GO:0010467">
    <property type="term" value="P:gene expression"/>
    <property type="evidence" value="ECO:0000266"/>
    <property type="project" value="RGD"/>
</dbReference>
<dbReference type="GO" id="GO:0002467">
    <property type="term" value="P:germinal center formation"/>
    <property type="evidence" value="ECO:0000250"/>
    <property type="project" value="UniProtKB"/>
</dbReference>
<dbReference type="GO" id="GO:0072102">
    <property type="term" value="P:glomerulus morphogenesis"/>
    <property type="evidence" value="ECO:0000250"/>
    <property type="project" value="UniProtKB"/>
</dbReference>
<dbReference type="GO" id="GO:0007507">
    <property type="term" value="P:heart development"/>
    <property type="evidence" value="ECO:0000270"/>
    <property type="project" value="UniProtKB"/>
</dbReference>
<dbReference type="GO" id="GO:0001947">
    <property type="term" value="P:heart looping"/>
    <property type="evidence" value="ECO:0000250"/>
    <property type="project" value="UniProtKB"/>
</dbReference>
<dbReference type="GO" id="GO:0006959">
    <property type="term" value="P:humoral immune response"/>
    <property type="evidence" value="ECO:0000250"/>
    <property type="project" value="UniProtKB"/>
</dbReference>
<dbReference type="GO" id="GO:0007611">
    <property type="term" value="P:learning or memory"/>
    <property type="evidence" value="ECO:0000250"/>
    <property type="project" value="UniProtKB"/>
</dbReference>
<dbReference type="GO" id="GO:0000165">
    <property type="term" value="P:MAPK cascade"/>
    <property type="evidence" value="ECO:0000250"/>
    <property type="project" value="UniProtKB"/>
</dbReference>
<dbReference type="GO" id="GO:0030318">
    <property type="term" value="P:melanocyte differentiation"/>
    <property type="evidence" value="ECO:0000250"/>
    <property type="project" value="UniProtKB"/>
</dbReference>
<dbReference type="GO" id="GO:0030224">
    <property type="term" value="P:monocyte differentiation"/>
    <property type="evidence" value="ECO:0000266"/>
    <property type="project" value="RGD"/>
</dbReference>
<dbReference type="GO" id="GO:0007521">
    <property type="term" value="P:muscle cell fate determination"/>
    <property type="evidence" value="ECO:0000266"/>
    <property type="project" value="RGD"/>
</dbReference>
<dbReference type="GO" id="GO:0014902">
    <property type="term" value="P:myotube differentiation"/>
    <property type="evidence" value="ECO:0000266"/>
    <property type="project" value="RGD"/>
</dbReference>
<dbReference type="GO" id="GO:0043537">
    <property type="term" value="P:negative regulation of blood vessel endothelial cell migration"/>
    <property type="evidence" value="ECO:0000266"/>
    <property type="project" value="RGD"/>
</dbReference>
<dbReference type="GO" id="GO:0050680">
    <property type="term" value="P:negative regulation of epithelial cell proliferation"/>
    <property type="evidence" value="ECO:0000266"/>
    <property type="project" value="RGD"/>
</dbReference>
<dbReference type="GO" id="GO:0010629">
    <property type="term" value="P:negative regulation of gene expression"/>
    <property type="evidence" value="ECO:0000250"/>
    <property type="project" value="UniProtKB"/>
</dbReference>
<dbReference type="GO" id="GO:0043524">
    <property type="term" value="P:negative regulation of neuron apoptotic process"/>
    <property type="evidence" value="ECO:0000314"/>
    <property type="project" value="Alzheimers_University_of_Toronto"/>
</dbReference>
<dbReference type="GO" id="GO:0030279">
    <property type="term" value="P:negative regulation of ossification"/>
    <property type="evidence" value="ECO:0000250"/>
    <property type="project" value="UniProtKB"/>
</dbReference>
<dbReference type="GO" id="GO:0000122">
    <property type="term" value="P:negative regulation of transcription by RNA polymerase II"/>
    <property type="evidence" value="ECO:0000250"/>
    <property type="project" value="UniProtKB"/>
</dbReference>
<dbReference type="GO" id="GO:1904753">
    <property type="term" value="P:negative regulation of vascular associated smooth muscle cell migration"/>
    <property type="evidence" value="ECO:0000266"/>
    <property type="project" value="RGD"/>
</dbReference>
<dbReference type="GO" id="GO:1904706">
    <property type="term" value="P:negative regulation of vascular associated smooth muscle cell proliferation"/>
    <property type="evidence" value="ECO:0000266"/>
    <property type="project" value="RGD"/>
</dbReference>
<dbReference type="GO" id="GO:1905563">
    <property type="term" value="P:negative regulation of vascular endothelial cell proliferation"/>
    <property type="evidence" value="ECO:0000266"/>
    <property type="project" value="RGD"/>
</dbReference>
<dbReference type="GO" id="GO:0072160">
    <property type="term" value="P:nephron tubule epithelial cell differentiation"/>
    <property type="evidence" value="ECO:0000250"/>
    <property type="project" value="UniProtKB"/>
</dbReference>
<dbReference type="GO" id="GO:0014033">
    <property type="term" value="P:neural crest cell differentiation"/>
    <property type="evidence" value="ECO:0000250"/>
    <property type="project" value="UniProtKB"/>
</dbReference>
<dbReference type="GO" id="GO:0048666">
    <property type="term" value="P:neuron development"/>
    <property type="evidence" value="ECO:0000250"/>
    <property type="project" value="UniProtKB"/>
</dbReference>
<dbReference type="GO" id="GO:0030182">
    <property type="term" value="P:neuron differentiation"/>
    <property type="evidence" value="ECO:0000250"/>
    <property type="project" value="UniProtKB"/>
</dbReference>
<dbReference type="GO" id="GO:0001764">
    <property type="term" value="P:neuron migration"/>
    <property type="evidence" value="ECO:0000250"/>
    <property type="project" value="UniProtKB"/>
</dbReference>
<dbReference type="GO" id="GO:0098989">
    <property type="term" value="P:NMDA selective glutamate receptor signaling pathway"/>
    <property type="evidence" value="ECO:0000250"/>
    <property type="project" value="UniProtKB"/>
</dbReference>
<dbReference type="GO" id="GO:0001649">
    <property type="term" value="P:osteoblast differentiation"/>
    <property type="evidence" value="ECO:0000266"/>
    <property type="project" value="RGD"/>
</dbReference>
<dbReference type="GO" id="GO:0003151">
    <property type="term" value="P:outflow tract morphogenesis"/>
    <property type="evidence" value="ECO:0000266"/>
    <property type="project" value="RGD"/>
</dbReference>
<dbReference type="GO" id="GO:0030220">
    <property type="term" value="P:platelet formation"/>
    <property type="evidence" value="ECO:0000250"/>
    <property type="project" value="UniProtKB"/>
</dbReference>
<dbReference type="GO" id="GO:0030890">
    <property type="term" value="P:positive regulation of B cell proliferation"/>
    <property type="evidence" value="ECO:0000250"/>
    <property type="project" value="UniProtKB"/>
</dbReference>
<dbReference type="GO" id="GO:2000987">
    <property type="term" value="P:positive regulation of behavioral fear response"/>
    <property type="evidence" value="ECO:0000250"/>
    <property type="project" value="UniProtKB"/>
</dbReference>
<dbReference type="GO" id="GO:0030501">
    <property type="term" value="P:positive regulation of bone mineralization"/>
    <property type="evidence" value="ECO:0000250"/>
    <property type="project" value="UniProtKB"/>
</dbReference>
<dbReference type="GO" id="GO:2000727">
    <property type="term" value="P:positive regulation of cardiac muscle cell differentiation"/>
    <property type="evidence" value="ECO:0000250"/>
    <property type="project" value="UniProtKB"/>
</dbReference>
<dbReference type="GO" id="GO:0060045">
    <property type="term" value="P:positive regulation of cardiac muscle cell proliferation"/>
    <property type="evidence" value="ECO:0000250"/>
    <property type="project" value="UniProtKB"/>
</dbReference>
<dbReference type="GO" id="GO:0010613">
    <property type="term" value="P:positive regulation of cardiac muscle hypertrophy"/>
    <property type="evidence" value="ECO:0000315"/>
    <property type="project" value="UniProtKB"/>
</dbReference>
<dbReference type="GO" id="GO:0071864">
    <property type="term" value="P:positive regulation of cell proliferation in bone marrow"/>
    <property type="evidence" value="ECO:0000266"/>
    <property type="project" value="RGD"/>
</dbReference>
<dbReference type="GO" id="GO:0045893">
    <property type="term" value="P:positive regulation of DNA-templated transcription"/>
    <property type="evidence" value="ECO:0000314"/>
    <property type="project" value="UniProtKB"/>
</dbReference>
<dbReference type="GO" id="GO:0010628">
    <property type="term" value="P:positive regulation of gene expression"/>
    <property type="evidence" value="ECO:0000266"/>
    <property type="project" value="RGD"/>
</dbReference>
<dbReference type="GO" id="GO:2000111">
    <property type="term" value="P:positive regulation of macrophage apoptotic process"/>
    <property type="evidence" value="ECO:0000250"/>
    <property type="project" value="UniProtKB"/>
</dbReference>
<dbReference type="GO" id="GO:0043410">
    <property type="term" value="P:positive regulation of MAPK cascade"/>
    <property type="evidence" value="ECO:0000314"/>
    <property type="project" value="Alzheimers_University_of_Toronto"/>
</dbReference>
<dbReference type="GO" id="GO:0045663">
    <property type="term" value="P:positive regulation of myoblast differentiation"/>
    <property type="evidence" value="ECO:0000250"/>
    <property type="project" value="UniProtKB"/>
</dbReference>
<dbReference type="GO" id="GO:0045666">
    <property type="term" value="P:positive regulation of neuron differentiation"/>
    <property type="evidence" value="ECO:0000250"/>
    <property type="project" value="UniProtKB"/>
</dbReference>
<dbReference type="GO" id="GO:0045669">
    <property type="term" value="P:positive regulation of osteoblast differentiation"/>
    <property type="evidence" value="ECO:0000250"/>
    <property type="project" value="UniProtKB"/>
</dbReference>
<dbReference type="GO" id="GO:2001016">
    <property type="term" value="P:positive regulation of skeletal muscle cell differentiation"/>
    <property type="evidence" value="ECO:0000250"/>
    <property type="project" value="UniProtKB"/>
</dbReference>
<dbReference type="GO" id="GO:0048643">
    <property type="term" value="P:positive regulation of skeletal muscle tissue development"/>
    <property type="evidence" value="ECO:0000250"/>
    <property type="project" value="UniProtKB"/>
</dbReference>
<dbReference type="GO" id="GO:0045944">
    <property type="term" value="P:positive regulation of transcription by RNA polymerase II"/>
    <property type="evidence" value="ECO:0000315"/>
    <property type="project" value="RGD"/>
</dbReference>
<dbReference type="GO" id="GO:0003138">
    <property type="term" value="P:primary heart field specification"/>
    <property type="evidence" value="ECO:0000250"/>
    <property type="project" value="UniProtKB"/>
</dbReference>
<dbReference type="GO" id="GO:0060998">
    <property type="term" value="P:regulation of dendritic spine development"/>
    <property type="evidence" value="ECO:0000250"/>
    <property type="project" value="UniProtKB"/>
</dbReference>
<dbReference type="GO" id="GO:0006355">
    <property type="term" value="P:regulation of DNA-templated transcription"/>
    <property type="evidence" value="ECO:0000266"/>
    <property type="project" value="RGD"/>
</dbReference>
<dbReference type="GO" id="GO:0002634">
    <property type="term" value="P:regulation of germinal center formation"/>
    <property type="evidence" value="ECO:0000250"/>
    <property type="project" value="UniProtKB"/>
</dbReference>
<dbReference type="GO" id="GO:0045652">
    <property type="term" value="P:regulation of megakaryocyte differentiation"/>
    <property type="evidence" value="ECO:0000250"/>
    <property type="project" value="UniProtKB"/>
</dbReference>
<dbReference type="GO" id="GO:0043523">
    <property type="term" value="P:regulation of neuron apoptotic process"/>
    <property type="evidence" value="ECO:0000250"/>
    <property type="project" value="UniProtKB"/>
</dbReference>
<dbReference type="GO" id="GO:0046928">
    <property type="term" value="P:regulation of neurotransmitter secretion"/>
    <property type="evidence" value="ECO:0000250"/>
    <property type="project" value="UniProtKB"/>
</dbReference>
<dbReference type="GO" id="GO:0060297">
    <property type="term" value="P:regulation of sarcomere organization"/>
    <property type="evidence" value="ECO:0000266"/>
    <property type="project" value="RGD"/>
</dbReference>
<dbReference type="GO" id="GO:0051963">
    <property type="term" value="P:regulation of synapse assembly"/>
    <property type="evidence" value="ECO:0000266"/>
    <property type="project" value="RGD"/>
</dbReference>
<dbReference type="GO" id="GO:0060025">
    <property type="term" value="P:regulation of synaptic activity"/>
    <property type="evidence" value="ECO:0000250"/>
    <property type="project" value="UniProtKB"/>
</dbReference>
<dbReference type="GO" id="GO:0048167">
    <property type="term" value="P:regulation of synaptic plasticity"/>
    <property type="evidence" value="ECO:0000250"/>
    <property type="project" value="UniProtKB"/>
</dbReference>
<dbReference type="GO" id="GO:0051966">
    <property type="term" value="P:regulation of synaptic transmission, glutamatergic"/>
    <property type="evidence" value="ECO:0000266"/>
    <property type="project" value="RGD"/>
</dbReference>
<dbReference type="GO" id="GO:0061333">
    <property type="term" value="P:renal tubule morphogenesis"/>
    <property type="evidence" value="ECO:0000250"/>
    <property type="project" value="UniProtKB"/>
</dbReference>
<dbReference type="GO" id="GO:0002931">
    <property type="term" value="P:response to ischemia"/>
    <property type="evidence" value="ECO:0000314"/>
    <property type="project" value="Alzheimers_University_of_Toronto"/>
</dbReference>
<dbReference type="GO" id="GO:0031667">
    <property type="term" value="P:response to nutrient levels"/>
    <property type="evidence" value="ECO:0000270"/>
    <property type="project" value="RGD"/>
</dbReference>
<dbReference type="GO" id="GO:0033197">
    <property type="term" value="P:response to vitamin E"/>
    <property type="evidence" value="ECO:0000270"/>
    <property type="project" value="RGD"/>
</dbReference>
<dbReference type="GO" id="GO:0060021">
    <property type="term" value="P:roof of mouth development"/>
    <property type="evidence" value="ECO:0000266"/>
    <property type="project" value="RGD"/>
</dbReference>
<dbReference type="GO" id="GO:0003139">
    <property type="term" value="P:secondary heart field specification"/>
    <property type="evidence" value="ECO:0000250"/>
    <property type="project" value="UniProtKB"/>
</dbReference>
<dbReference type="GO" id="GO:1902287">
    <property type="term" value="P:semaphorin-plexin signaling pathway involved in axon guidance"/>
    <property type="evidence" value="ECO:0000266"/>
    <property type="project" value="RGD"/>
</dbReference>
<dbReference type="GO" id="GO:0003185">
    <property type="term" value="P:sinoatrial valve morphogenesis"/>
    <property type="evidence" value="ECO:0000250"/>
    <property type="project" value="UniProtKB"/>
</dbReference>
<dbReference type="GO" id="GO:0035914">
    <property type="term" value="P:skeletal muscle cell differentiation"/>
    <property type="evidence" value="ECO:0000266"/>
    <property type="project" value="RGD"/>
</dbReference>
<dbReference type="GO" id="GO:0007519">
    <property type="term" value="P:skeletal muscle tissue development"/>
    <property type="evidence" value="ECO:0000266"/>
    <property type="project" value="RGD"/>
</dbReference>
<dbReference type="GO" id="GO:0051145">
    <property type="term" value="P:smooth muscle cell differentiation"/>
    <property type="evidence" value="ECO:0000266"/>
    <property type="project" value="RGD"/>
</dbReference>
<dbReference type="GO" id="GO:0097492">
    <property type="term" value="P:sympathetic neuron axon guidance"/>
    <property type="evidence" value="ECO:0000266"/>
    <property type="project" value="RGD"/>
</dbReference>
<dbReference type="GO" id="GO:0060290">
    <property type="term" value="P:transdifferentiation"/>
    <property type="evidence" value="ECO:0000315"/>
    <property type="project" value="RGD"/>
</dbReference>
<dbReference type="GO" id="GO:0055012">
    <property type="term" value="P:ventricular cardiac muscle cell differentiation"/>
    <property type="evidence" value="ECO:0000250"/>
    <property type="project" value="UniProtKB"/>
</dbReference>
<dbReference type="CDD" id="cd00265">
    <property type="entry name" value="MADS_MEF2_like"/>
    <property type="match status" value="1"/>
</dbReference>
<dbReference type="FunFam" id="3.40.1810.10:FF:000001">
    <property type="entry name" value="Myocyte-specific enhancer factor 2A homolog"/>
    <property type="match status" value="1"/>
</dbReference>
<dbReference type="Gene3D" id="3.40.1810.10">
    <property type="entry name" value="Transcription factor, MADS-box"/>
    <property type="match status" value="1"/>
</dbReference>
<dbReference type="InterPro" id="IPR022102">
    <property type="entry name" value="HJURP_C"/>
</dbReference>
<dbReference type="InterPro" id="IPR033896">
    <property type="entry name" value="MEF2-like_N"/>
</dbReference>
<dbReference type="InterPro" id="IPR002100">
    <property type="entry name" value="TF_MADSbox"/>
</dbReference>
<dbReference type="InterPro" id="IPR036879">
    <property type="entry name" value="TF_MADSbox_sf"/>
</dbReference>
<dbReference type="PANTHER" id="PTHR11945">
    <property type="entry name" value="MADS BOX PROTEIN"/>
    <property type="match status" value="1"/>
</dbReference>
<dbReference type="PANTHER" id="PTHR11945:SF534">
    <property type="entry name" value="MYOCYTE-SPECIFIC ENHANCER FACTOR 2"/>
    <property type="match status" value="1"/>
</dbReference>
<dbReference type="Pfam" id="PF12347">
    <property type="entry name" value="HJURP_C"/>
    <property type="match status" value="1"/>
</dbReference>
<dbReference type="Pfam" id="PF00319">
    <property type="entry name" value="SRF-TF"/>
    <property type="match status" value="1"/>
</dbReference>
<dbReference type="PRINTS" id="PR00404">
    <property type="entry name" value="MADSDOMAIN"/>
</dbReference>
<dbReference type="SMART" id="SM00432">
    <property type="entry name" value="MADS"/>
    <property type="match status" value="1"/>
</dbReference>
<dbReference type="SUPFAM" id="SSF55455">
    <property type="entry name" value="SRF-like"/>
    <property type="match status" value="1"/>
</dbReference>
<dbReference type="PROSITE" id="PS00350">
    <property type="entry name" value="MADS_BOX_1"/>
    <property type="match status" value="1"/>
</dbReference>
<dbReference type="PROSITE" id="PS50066">
    <property type="entry name" value="MADS_BOX_2"/>
    <property type="match status" value="1"/>
</dbReference>
<feature type="chain" id="PRO_0000441823" description="Myocyte-specific enhancer factor 2C">
    <location>
        <begin position="1"/>
        <end position="473"/>
    </location>
</feature>
<feature type="domain" description="MADS-box" evidence="5">
    <location>
        <begin position="1"/>
        <end position="61"/>
    </location>
</feature>
<feature type="DNA-binding region" description="Mef2-type" evidence="4">
    <location>
        <begin position="58"/>
        <end position="86"/>
    </location>
</feature>
<feature type="region of interest" description="Disordered" evidence="6">
    <location>
        <begin position="91"/>
        <end position="116"/>
    </location>
</feature>
<feature type="region of interest" description="Disordered" evidence="6">
    <location>
        <begin position="180"/>
        <end position="206"/>
    </location>
</feature>
<feature type="region of interest" description="Beta domain" evidence="2">
    <location>
        <begin position="271"/>
        <end position="278"/>
    </location>
</feature>
<feature type="region of interest" description="Transcription repressor" evidence="2">
    <location>
        <begin position="368"/>
        <end position="399"/>
    </location>
</feature>
<feature type="region of interest" description="Disordered" evidence="6">
    <location>
        <begin position="375"/>
        <end position="473"/>
    </location>
</feature>
<feature type="compositionally biased region" description="Polar residues" evidence="6">
    <location>
        <begin position="375"/>
        <end position="390"/>
    </location>
</feature>
<feature type="compositionally biased region" description="Low complexity" evidence="6">
    <location>
        <begin position="419"/>
        <end position="432"/>
    </location>
</feature>
<feature type="compositionally biased region" description="Basic and acidic residues" evidence="6">
    <location>
        <begin position="433"/>
        <end position="443"/>
    </location>
</feature>
<feature type="site" description="Cleavage" evidence="2">
    <location>
        <begin position="432"/>
        <end position="433"/>
    </location>
</feature>
<feature type="modified residue" description="N6-acetyllysine" evidence="3">
    <location>
        <position position="4"/>
    </location>
</feature>
<feature type="modified residue" description="Phosphoserine; by CK2" evidence="3">
    <location>
        <position position="59"/>
    </location>
</feature>
<feature type="modified residue" description="Phosphoserine" evidence="10">
    <location>
        <position position="98"/>
    </location>
</feature>
<feature type="modified residue" description="Phosphoserine" evidence="3">
    <location>
        <position position="106"/>
    </location>
</feature>
<feature type="modified residue" description="Phosphoserine" evidence="10">
    <location>
        <position position="110"/>
    </location>
</feature>
<feature type="modified residue" description="N6-acetyllysine" evidence="2">
    <location>
        <position position="116"/>
    </location>
</feature>
<feature type="modified residue" description="N6-acetyllysine" evidence="2">
    <location>
        <position position="119"/>
    </location>
</feature>
<feature type="modified residue" description="Phosphoserine" evidence="10">
    <location>
        <position position="222"/>
    </location>
</feature>
<feature type="modified residue" description="Phosphoserine" evidence="2">
    <location>
        <position position="228"/>
    </location>
</feature>
<feature type="modified residue" description="N6-acetyllysine" evidence="2">
    <location>
        <position position="234"/>
    </location>
</feature>
<feature type="modified residue" description="N6-acetyllysine" evidence="2">
    <location>
        <position position="239"/>
    </location>
</feature>
<feature type="modified residue" description="Phosphoserine" evidence="10">
    <location>
        <position position="240"/>
    </location>
</feature>
<feature type="modified residue" description="N6-acetyllysine" evidence="2">
    <location>
        <position position="252"/>
    </location>
</feature>
<feature type="modified residue" description="N6-acetyllysine" evidence="2">
    <location>
        <position position="264"/>
    </location>
</feature>
<feature type="modified residue" description="Phosphothreonine; by MAPK14" evidence="2">
    <location>
        <position position="293"/>
    </location>
</feature>
<feature type="modified residue" description="Phosphothreonine; by MAPK14" evidence="2">
    <location>
        <position position="300"/>
    </location>
</feature>
<feature type="modified residue" description="Phosphoserine; by CDK5" evidence="2">
    <location>
        <position position="396"/>
    </location>
</feature>
<feature type="modified residue" description="Phosphoserine; by MAPK7" evidence="2">
    <location>
        <position position="419"/>
    </location>
</feature>
<feature type="modified residue" description="Phosphoserine" evidence="2">
    <location>
        <position position="445"/>
    </location>
</feature>
<feature type="cross-link" description="Glycyl lysine isopeptide (Lys-Gly) (interchain with G-Cter in SUMO)" evidence="2">
    <location>
        <position position="391"/>
    </location>
</feature>
<comment type="function">
    <text evidence="3 7">Transcription activator which binds specifically to the MEF2 element present in the regulatory regions of many muscle-specific genes (PubMed:15862299). Controls cardiac morphogenesis and myogenesis, and is also involved in vascular development. Enhances transcriptional activation mediated by SOX18. Plays an essential role in hippocampal-dependent learning and memory by suppressing the number of excitatory synapses and thus regulating basal and evoked synaptic transmission. Crucial for normal neuronal development, distribution, and electrical activity in the neocortex. Necessary for proper development of megakaryocytes and platelets and for bone marrow B-lymphopoiesis. Required for B-cell survival and proliferation in response to BCR stimulation, efficient IgG1 antibody responses to T-cell-dependent antigens and for normal induction of germinal center B-cells. May also be involved in neurogenesis and in the development of cortical architecture (By similarity).</text>
</comment>
<comment type="subunit">
    <text evidence="3 7">Forms a complex with class II HDACs in undifferentiating cells. On myogenic differentiation, HDACs are released into the cytoplasm allowing MEF2s to interact with other proteins for activation. Interacts with EP300 in differentiating cells; the interaction acetylates MEF2C leading to increased DNA binding and activation. Interacts with HDAC7 and CARM1. Interacts with HDAC4 and HDAC9; the interaction with HDACs represses transcriptional activity. Interacts with LPIN1. Interacts with MYOCD. Interacts with AKAP13. Interacts with FOXK1; the interaction inhibits MEF2C transactivation activity (By similarity). Interacts (via N-terminus) with HABP4; this interaction decreases DNA-binding activity of MEF2C in myocardial cells in response to mechanical stress (PubMed:15862299). Interacts with JPH2; interaction specifically takes place with the Junctophilin-2 N-terminal fragment cleavage product of JPH2 (By similarity). Interacts (via MADS box) with SOX18 (By similarity). Interacts with PHF7; the interaction promotes MEF2C binding to its transcription targets (By similarity).</text>
</comment>
<comment type="subcellular location">
    <subcellularLocation>
        <location evidence="7">Nucleus</location>
    </subcellularLocation>
    <subcellularLocation>
        <location evidence="7">Cytoplasm</location>
        <location evidence="7">Sarcoplasm</location>
    </subcellularLocation>
</comment>
<comment type="tissue specificity">
    <text evidence="7">Expressed in the heart (PubMed:15862299). Expressed in cardiac myocytes (at protein level) (PubMed:15862299).</text>
</comment>
<comment type="domain">
    <text evidence="1">The beta domain is required for enhancement of transcriptional activity.</text>
</comment>
<comment type="PTM">
    <text evidence="1">Phosphorylated on Ser-59; which enhances DNA binding activity. Phosphorylated on Ser-396; which is required for Lys-391 sumoylation and inhibits transcriptional activity.</text>
</comment>
<comment type="PTM">
    <text evidence="1">Acetylated by p300 on several sites in diffentiating myocytes. Acetylation on Lys-4 increases DNA binding and transactivation.</text>
</comment>
<comment type="PTM">
    <text evidence="1">Sumoylated on Lys-391 with SUMO2 but not SUMO1; which represses transcriptional activity.</text>
</comment>
<comment type="PTM">
    <text evidence="1">Proteolytically cleaved in cerebellar granule neurons on several sites by caspase 3 and caspase 7 following neurotoxicity. Preferentially cleaves the CDK5-mediated hyperphosphorylated form which leads to neuron apoptosis and transcriptional inactivation.</text>
</comment>
<comment type="similarity">
    <text evidence="8">Belongs to the MEF2 family.</text>
</comment>
<protein>
    <recommendedName>
        <fullName evidence="8">Myocyte-specific enhancer factor 2C</fullName>
    </recommendedName>
    <alternativeName>
        <fullName evidence="9">Myocyte enhancer factor 2C</fullName>
    </alternativeName>
</protein>
<organism>
    <name type="scientific">Rattus norvegicus</name>
    <name type="common">Rat</name>
    <dbReference type="NCBI Taxonomy" id="10116"/>
    <lineage>
        <taxon>Eukaryota</taxon>
        <taxon>Metazoa</taxon>
        <taxon>Chordata</taxon>
        <taxon>Craniata</taxon>
        <taxon>Vertebrata</taxon>
        <taxon>Euteleostomi</taxon>
        <taxon>Mammalia</taxon>
        <taxon>Eutheria</taxon>
        <taxon>Euarchontoglires</taxon>
        <taxon>Glires</taxon>
        <taxon>Rodentia</taxon>
        <taxon>Myomorpha</taxon>
        <taxon>Muroidea</taxon>
        <taxon>Muridae</taxon>
        <taxon>Murinae</taxon>
        <taxon>Rattus</taxon>
    </lineage>
</organism>
<proteinExistence type="evidence at protein level"/>
<name>MEF2C_RAT</name>
<evidence type="ECO:0000250" key="1"/>
<evidence type="ECO:0000250" key="2">
    <source>
        <dbReference type="UniProtKB" id="Q06413"/>
    </source>
</evidence>
<evidence type="ECO:0000250" key="3">
    <source>
        <dbReference type="UniProtKB" id="Q8CFN5"/>
    </source>
</evidence>
<evidence type="ECO:0000255" key="4"/>
<evidence type="ECO:0000255" key="5">
    <source>
        <dbReference type="PROSITE-ProRule" id="PRU00251"/>
    </source>
</evidence>
<evidence type="ECO:0000256" key="6">
    <source>
        <dbReference type="SAM" id="MobiDB-lite"/>
    </source>
</evidence>
<evidence type="ECO:0000269" key="7">
    <source>
    </source>
</evidence>
<evidence type="ECO:0000305" key="8"/>
<evidence type="ECO:0000312" key="9">
    <source>
        <dbReference type="RGD" id="1563119"/>
    </source>
</evidence>
<evidence type="ECO:0007744" key="10">
    <source>
    </source>
</evidence>
<keyword id="KW-0007">Acetylation</keyword>
<keyword id="KW-0010">Activator</keyword>
<keyword id="KW-0053">Apoptosis</keyword>
<keyword id="KW-0963">Cytoplasm</keyword>
<keyword id="KW-0217">Developmental protein</keyword>
<keyword id="KW-0221">Differentiation</keyword>
<keyword id="KW-0238">DNA-binding</keyword>
<keyword id="KW-1017">Isopeptide bond</keyword>
<keyword id="KW-0524">Neurogenesis</keyword>
<keyword id="KW-0539">Nucleus</keyword>
<keyword id="KW-0597">Phosphoprotein</keyword>
<keyword id="KW-1185">Reference proteome</keyword>
<keyword id="KW-0804">Transcription</keyword>
<keyword id="KW-0805">Transcription regulation</keyword>
<keyword id="KW-0832">Ubl conjugation</keyword>
<sequence>MGRKKIQITRIMDERNRQVTFTKRKFGLMKKAYELSVLCDCEIALIIFNSTNKLFQYASTDMDKVLLKYTEYNEPHESRTNSDIVETLRKKGLNGCDSPDPDADDSVGHSPESEDKYRKINEDIDLMISRQRLCAVPPPNFEMPVTIPVSSHNSLVYSNPVSSLGNPNLLPLAHPSLQRNSMSPGVTHRPPSAGNTGGLMGGDLTSGAGTSAGNGYGNPRNSPGLLVSPGNLNKNIQAKSPPPMNLGMNNRKPDLRVLIPPGSKNTMPSVSEDVDLLLNQRINNSQSAQSLATPVVSVATPTLPGQGMGGYPSAISTTYGTEYSLSSADLSSLSGFNTASALHLGSVTGWQQQHLHNMPPSALSQLGACTSTHLSQSSNLSLPSTQSLNIKSEPVSPPRDRTTTPSRYPQHTRHEAGRSPVDSLSSCSSSYDGSDREDHRNEFHSPIGLTRPSPDERESPSVKRMRLSEGWAT</sequence>
<gene>
    <name evidence="9" type="primary">Mef2c</name>
</gene>
<accession>A0A096MJY4</accession>
<reference key="1">
    <citation type="journal article" date="2004" name="Nature">
        <title>Genome sequence of the Brown Norway rat yields insights into mammalian evolution.</title>
        <authorList>
            <person name="Gibbs R.A."/>
            <person name="Weinstock G.M."/>
            <person name="Metzker M.L."/>
            <person name="Muzny D.M."/>
            <person name="Sodergren E.J."/>
            <person name="Scherer S."/>
            <person name="Scott G."/>
            <person name="Steffen D."/>
            <person name="Worley K.C."/>
            <person name="Burch P.E."/>
            <person name="Okwuonu G."/>
            <person name="Hines S."/>
            <person name="Lewis L."/>
            <person name="Deramo C."/>
            <person name="Delgado O."/>
            <person name="Dugan-Rocha S."/>
            <person name="Miner G."/>
            <person name="Morgan M."/>
            <person name="Hawes A."/>
            <person name="Gill R."/>
            <person name="Holt R.A."/>
            <person name="Adams M.D."/>
            <person name="Amanatides P.G."/>
            <person name="Baden-Tillson H."/>
            <person name="Barnstead M."/>
            <person name="Chin S."/>
            <person name="Evans C.A."/>
            <person name="Ferriera S."/>
            <person name="Fosler C."/>
            <person name="Glodek A."/>
            <person name="Gu Z."/>
            <person name="Jennings D."/>
            <person name="Kraft C.L."/>
            <person name="Nguyen T."/>
            <person name="Pfannkoch C.M."/>
            <person name="Sitter C."/>
            <person name="Sutton G.G."/>
            <person name="Venter J.C."/>
            <person name="Woodage T."/>
            <person name="Smith D."/>
            <person name="Lee H.-M."/>
            <person name="Gustafson E."/>
            <person name="Cahill P."/>
            <person name="Kana A."/>
            <person name="Doucette-Stamm L."/>
            <person name="Weinstock K."/>
            <person name="Fechtel K."/>
            <person name="Weiss R.B."/>
            <person name="Dunn D.M."/>
            <person name="Green E.D."/>
            <person name="Blakesley R.W."/>
            <person name="Bouffard G.G."/>
            <person name="De Jong P.J."/>
            <person name="Osoegawa K."/>
            <person name="Zhu B."/>
            <person name="Marra M."/>
            <person name="Schein J."/>
            <person name="Bosdet I."/>
            <person name="Fjell C."/>
            <person name="Jones S."/>
            <person name="Krzywinski M."/>
            <person name="Mathewson C."/>
            <person name="Siddiqui A."/>
            <person name="Wye N."/>
            <person name="McPherson J."/>
            <person name="Zhao S."/>
            <person name="Fraser C.M."/>
            <person name="Shetty J."/>
            <person name="Shatsman S."/>
            <person name="Geer K."/>
            <person name="Chen Y."/>
            <person name="Abramzon S."/>
            <person name="Nierman W.C."/>
            <person name="Havlak P.H."/>
            <person name="Chen R."/>
            <person name="Durbin K.J."/>
            <person name="Egan A."/>
            <person name="Ren Y."/>
            <person name="Song X.-Z."/>
            <person name="Li B."/>
            <person name="Liu Y."/>
            <person name="Qin X."/>
            <person name="Cawley S."/>
            <person name="Cooney A.J."/>
            <person name="D'Souza L.M."/>
            <person name="Martin K."/>
            <person name="Wu J.Q."/>
            <person name="Gonzalez-Garay M.L."/>
            <person name="Jackson A.R."/>
            <person name="Kalafus K.J."/>
            <person name="McLeod M.P."/>
            <person name="Milosavljevic A."/>
            <person name="Virk D."/>
            <person name="Volkov A."/>
            <person name="Wheeler D.A."/>
            <person name="Zhang Z."/>
            <person name="Bailey J.A."/>
            <person name="Eichler E.E."/>
            <person name="Tuzun E."/>
            <person name="Birney E."/>
            <person name="Mongin E."/>
            <person name="Ureta-Vidal A."/>
            <person name="Woodwark C."/>
            <person name="Zdobnov E."/>
            <person name="Bork P."/>
            <person name="Suyama M."/>
            <person name="Torrents D."/>
            <person name="Alexandersson M."/>
            <person name="Trask B.J."/>
            <person name="Young J.M."/>
            <person name="Huang H."/>
            <person name="Wang H."/>
            <person name="Xing H."/>
            <person name="Daniels S."/>
            <person name="Gietzen D."/>
            <person name="Schmidt J."/>
            <person name="Stevens K."/>
            <person name="Vitt U."/>
            <person name="Wingrove J."/>
            <person name="Camara F."/>
            <person name="Mar Alba M."/>
            <person name="Abril J.F."/>
            <person name="Guigo R."/>
            <person name="Smit A."/>
            <person name="Dubchak I."/>
            <person name="Rubin E.M."/>
            <person name="Couronne O."/>
            <person name="Poliakov A."/>
            <person name="Huebner N."/>
            <person name="Ganten D."/>
            <person name="Goesele C."/>
            <person name="Hummel O."/>
            <person name="Kreitler T."/>
            <person name="Lee Y.-A."/>
            <person name="Monti J."/>
            <person name="Schulz H."/>
            <person name="Zimdahl H."/>
            <person name="Himmelbauer H."/>
            <person name="Lehrach H."/>
            <person name="Jacob H.J."/>
            <person name="Bromberg S."/>
            <person name="Gullings-Handley J."/>
            <person name="Jensen-Seaman M.I."/>
            <person name="Kwitek A.E."/>
            <person name="Lazar J."/>
            <person name="Pasko D."/>
            <person name="Tonellato P.J."/>
            <person name="Twigger S."/>
            <person name="Ponting C.P."/>
            <person name="Duarte J.M."/>
            <person name="Rice S."/>
            <person name="Goodstadt L."/>
            <person name="Beatson S.A."/>
            <person name="Emes R.D."/>
            <person name="Winter E.E."/>
            <person name="Webber C."/>
            <person name="Brandt P."/>
            <person name="Nyakatura G."/>
            <person name="Adetobi M."/>
            <person name="Chiaromonte F."/>
            <person name="Elnitski L."/>
            <person name="Eswara P."/>
            <person name="Hardison R.C."/>
            <person name="Hou M."/>
            <person name="Kolbe D."/>
            <person name="Makova K."/>
            <person name="Miller W."/>
            <person name="Nekrutenko A."/>
            <person name="Riemer C."/>
            <person name="Schwartz S."/>
            <person name="Taylor J."/>
            <person name="Yang S."/>
            <person name="Zhang Y."/>
            <person name="Lindpaintner K."/>
            <person name="Andrews T.D."/>
            <person name="Caccamo M."/>
            <person name="Clamp M."/>
            <person name="Clarke L."/>
            <person name="Curwen V."/>
            <person name="Durbin R.M."/>
            <person name="Eyras E."/>
            <person name="Searle S.M."/>
            <person name="Cooper G.M."/>
            <person name="Batzoglou S."/>
            <person name="Brudno M."/>
            <person name="Sidow A."/>
            <person name="Stone E.A."/>
            <person name="Payseur B.A."/>
            <person name="Bourque G."/>
            <person name="Lopez-Otin C."/>
            <person name="Puente X.S."/>
            <person name="Chakrabarti K."/>
            <person name="Chatterji S."/>
            <person name="Dewey C."/>
            <person name="Pachter L."/>
            <person name="Bray N."/>
            <person name="Yap V.B."/>
            <person name="Caspi A."/>
            <person name="Tesler G."/>
            <person name="Pevzner P.A."/>
            <person name="Haussler D."/>
            <person name="Roskin K.M."/>
            <person name="Baertsch R."/>
            <person name="Clawson H."/>
            <person name="Furey T.S."/>
            <person name="Hinrichs A.S."/>
            <person name="Karolchik D."/>
            <person name="Kent W.J."/>
            <person name="Rosenbloom K.R."/>
            <person name="Trumbower H."/>
            <person name="Weirauch M."/>
            <person name="Cooper D.N."/>
            <person name="Stenson P.D."/>
            <person name="Ma B."/>
            <person name="Brent M."/>
            <person name="Arumugam M."/>
            <person name="Shteynberg D."/>
            <person name="Copley R.R."/>
            <person name="Taylor M.S."/>
            <person name="Riethman H."/>
            <person name="Mudunuri U."/>
            <person name="Peterson J."/>
            <person name="Guyer M."/>
            <person name="Felsenfeld A."/>
            <person name="Old S."/>
            <person name="Mockrin S."/>
            <person name="Collins F.S."/>
        </authorList>
    </citation>
    <scope>NUCLEOTIDE SEQUENCE [LARGE SCALE GENOMIC DNA]</scope>
    <source>
        <strain>Brown Norway</strain>
    </source>
</reference>
<reference key="2">
    <citation type="journal article" date="2005" name="FEBS Lett.">
        <title>MEF2C DNA-binding activity is inhibited through its interaction with the regulatory protein Ki-1/57.</title>
        <authorList>
            <person name="Kobarg C.B."/>
            <person name="Kobarg J."/>
            <person name="Crosara-Alberto D.P."/>
            <person name="Theizen T.H."/>
            <person name="Franchini K.G."/>
        </authorList>
    </citation>
    <scope>FUNCTION</scope>
    <scope>DNA-BINDING</scope>
    <scope>INTERACTION WITH HABP4</scope>
    <scope>SUBCELLULAR LOCATION</scope>
    <scope>TISSUE SPECIFICITY</scope>
</reference>
<reference key="3">
    <citation type="journal article" date="2012" name="Nat. Commun.">
        <title>Quantitative maps of protein phosphorylation sites across 14 different rat organs and tissues.</title>
        <authorList>
            <person name="Lundby A."/>
            <person name="Secher A."/>
            <person name="Lage K."/>
            <person name="Nordsborg N.B."/>
            <person name="Dmytriyev A."/>
            <person name="Lundby C."/>
            <person name="Olsen J.V."/>
        </authorList>
    </citation>
    <scope>PHOSPHORYLATION [LARGE SCALE ANALYSIS] AT SER-98; SER-110; SER-222 AND SER-240</scope>
    <scope>IDENTIFICATION BY MASS SPECTROMETRY [LARGE SCALE ANALYSIS]</scope>
</reference>